<accession>B9KPC7</accession>
<dbReference type="EC" id="3.6.1.31" evidence="1"/>
<dbReference type="EMBL" id="CP001150">
    <property type="protein sequence ID" value="ACM00420.1"/>
    <property type="molecule type" value="Genomic_DNA"/>
</dbReference>
<dbReference type="RefSeq" id="WP_012643804.1">
    <property type="nucleotide sequence ID" value="NC_011963.1"/>
</dbReference>
<dbReference type="SMR" id="B9KPC7"/>
<dbReference type="GeneID" id="67446013"/>
<dbReference type="KEGG" id="rsk:RSKD131_0560"/>
<dbReference type="HOGENOM" id="CLU_123337_1_1_5"/>
<dbReference type="UniPathway" id="UPA00031">
    <property type="reaction ID" value="UER00007"/>
</dbReference>
<dbReference type="GO" id="GO:0005737">
    <property type="term" value="C:cytoplasm"/>
    <property type="evidence" value="ECO:0007669"/>
    <property type="project" value="UniProtKB-SubCell"/>
</dbReference>
<dbReference type="GO" id="GO:0005524">
    <property type="term" value="F:ATP binding"/>
    <property type="evidence" value="ECO:0007669"/>
    <property type="project" value="UniProtKB-KW"/>
</dbReference>
<dbReference type="GO" id="GO:0004636">
    <property type="term" value="F:phosphoribosyl-ATP diphosphatase activity"/>
    <property type="evidence" value="ECO:0007669"/>
    <property type="project" value="UniProtKB-UniRule"/>
</dbReference>
<dbReference type="GO" id="GO:0000105">
    <property type="term" value="P:L-histidine biosynthetic process"/>
    <property type="evidence" value="ECO:0007669"/>
    <property type="project" value="UniProtKB-UniRule"/>
</dbReference>
<dbReference type="CDD" id="cd11534">
    <property type="entry name" value="NTP-PPase_HisIE_like"/>
    <property type="match status" value="1"/>
</dbReference>
<dbReference type="Gene3D" id="1.10.287.1080">
    <property type="entry name" value="MazG-like"/>
    <property type="match status" value="1"/>
</dbReference>
<dbReference type="HAMAP" id="MF_01020">
    <property type="entry name" value="HisE"/>
    <property type="match status" value="1"/>
</dbReference>
<dbReference type="InterPro" id="IPR008179">
    <property type="entry name" value="HisE"/>
</dbReference>
<dbReference type="InterPro" id="IPR021130">
    <property type="entry name" value="PRib-ATP_PPHydrolase-like"/>
</dbReference>
<dbReference type="NCBIfam" id="TIGR03188">
    <property type="entry name" value="histidine_hisI"/>
    <property type="match status" value="1"/>
</dbReference>
<dbReference type="NCBIfam" id="NF001613">
    <property type="entry name" value="PRK00400.1-5"/>
    <property type="match status" value="1"/>
</dbReference>
<dbReference type="PANTHER" id="PTHR42945">
    <property type="entry name" value="HISTIDINE BIOSYNTHESIS BIFUNCTIONAL PROTEIN"/>
    <property type="match status" value="1"/>
</dbReference>
<dbReference type="PANTHER" id="PTHR42945:SF1">
    <property type="entry name" value="HISTIDINE BIOSYNTHESIS BIFUNCTIONAL PROTEIN HIS7"/>
    <property type="match status" value="1"/>
</dbReference>
<dbReference type="Pfam" id="PF01503">
    <property type="entry name" value="PRA-PH"/>
    <property type="match status" value="1"/>
</dbReference>
<dbReference type="SUPFAM" id="SSF101386">
    <property type="entry name" value="all-alpha NTP pyrophosphatases"/>
    <property type="match status" value="1"/>
</dbReference>
<gene>
    <name evidence="1" type="primary">hisE</name>
    <name type="ordered locus">RSKD131_0560</name>
</gene>
<reference key="1">
    <citation type="journal article" date="2009" name="J. Bacteriol.">
        <title>Complete genome sequence of Rhodobacter sphaeroides KD131.</title>
        <authorList>
            <person name="Lim S.-K."/>
            <person name="Kim S.J."/>
            <person name="Cha S.H."/>
            <person name="Oh Y.-K."/>
            <person name="Rhee H.-J."/>
            <person name="Kim M.-S."/>
            <person name="Lee J.K."/>
        </authorList>
    </citation>
    <scope>NUCLEOTIDE SEQUENCE [LARGE SCALE GENOMIC DNA]</scope>
    <source>
        <strain>KD131 / KCTC 12085</strain>
    </source>
</reference>
<protein>
    <recommendedName>
        <fullName evidence="1">Phosphoribosyl-ATP pyrophosphatase</fullName>
        <shortName evidence="1">PRA-PH</shortName>
        <ecNumber evidence="1">3.6.1.31</ecNumber>
    </recommendedName>
</protein>
<comment type="catalytic activity">
    <reaction evidence="1">
        <text>1-(5-phospho-beta-D-ribosyl)-ATP + H2O = 1-(5-phospho-beta-D-ribosyl)-5'-AMP + diphosphate + H(+)</text>
        <dbReference type="Rhea" id="RHEA:22828"/>
        <dbReference type="ChEBI" id="CHEBI:15377"/>
        <dbReference type="ChEBI" id="CHEBI:15378"/>
        <dbReference type="ChEBI" id="CHEBI:33019"/>
        <dbReference type="ChEBI" id="CHEBI:59457"/>
        <dbReference type="ChEBI" id="CHEBI:73183"/>
        <dbReference type="EC" id="3.6.1.31"/>
    </reaction>
</comment>
<comment type="pathway">
    <text evidence="1">Amino-acid biosynthesis; L-histidine biosynthesis; L-histidine from 5-phospho-alpha-D-ribose 1-diphosphate: step 2/9.</text>
</comment>
<comment type="subcellular location">
    <subcellularLocation>
        <location evidence="1">Cytoplasm</location>
    </subcellularLocation>
</comment>
<comment type="similarity">
    <text evidence="1">Belongs to the PRA-PH family.</text>
</comment>
<feature type="chain" id="PRO_1000149060" description="Phosphoribosyl-ATP pyrophosphatase">
    <location>
        <begin position="1"/>
        <end position="103"/>
    </location>
</feature>
<evidence type="ECO:0000255" key="1">
    <source>
        <dbReference type="HAMAP-Rule" id="MF_01020"/>
    </source>
</evidence>
<proteinExistence type="inferred from homology"/>
<name>HIS2_CERSK</name>
<sequence>MTVLERLAATVEARKGVDPDSSWTAKLLARGPEKCAEKFGEEAVEAIIEAVRGDRDRLASEAADVLYHLIVMLAARDVTLAEVMAVLEAREGTSGIAEKAGRG</sequence>
<organism>
    <name type="scientific">Cereibacter sphaeroides (strain KD131 / KCTC 12085)</name>
    <name type="common">Rhodobacter sphaeroides</name>
    <dbReference type="NCBI Taxonomy" id="557760"/>
    <lineage>
        <taxon>Bacteria</taxon>
        <taxon>Pseudomonadati</taxon>
        <taxon>Pseudomonadota</taxon>
        <taxon>Alphaproteobacteria</taxon>
        <taxon>Rhodobacterales</taxon>
        <taxon>Paracoccaceae</taxon>
        <taxon>Cereibacter</taxon>
    </lineage>
</organism>
<keyword id="KW-0028">Amino-acid biosynthesis</keyword>
<keyword id="KW-0067">ATP-binding</keyword>
<keyword id="KW-0963">Cytoplasm</keyword>
<keyword id="KW-0368">Histidine biosynthesis</keyword>
<keyword id="KW-0378">Hydrolase</keyword>
<keyword id="KW-0547">Nucleotide-binding</keyword>